<organism>
    <name type="scientific">Yersinia pseudotuberculosis serotype O:3 (strain YPIII)</name>
    <dbReference type="NCBI Taxonomy" id="502800"/>
    <lineage>
        <taxon>Bacteria</taxon>
        <taxon>Pseudomonadati</taxon>
        <taxon>Pseudomonadota</taxon>
        <taxon>Gammaproteobacteria</taxon>
        <taxon>Enterobacterales</taxon>
        <taxon>Yersiniaceae</taxon>
        <taxon>Yersinia</taxon>
    </lineage>
</organism>
<reference key="1">
    <citation type="submission" date="2008-02" db="EMBL/GenBank/DDBJ databases">
        <title>Complete sequence of Yersinia pseudotuberculosis YPIII.</title>
        <authorList>
            <consortium name="US DOE Joint Genome Institute"/>
            <person name="Copeland A."/>
            <person name="Lucas S."/>
            <person name="Lapidus A."/>
            <person name="Glavina del Rio T."/>
            <person name="Dalin E."/>
            <person name="Tice H."/>
            <person name="Bruce D."/>
            <person name="Goodwin L."/>
            <person name="Pitluck S."/>
            <person name="Munk A.C."/>
            <person name="Brettin T."/>
            <person name="Detter J.C."/>
            <person name="Han C."/>
            <person name="Tapia R."/>
            <person name="Schmutz J."/>
            <person name="Larimer F."/>
            <person name="Land M."/>
            <person name="Hauser L."/>
            <person name="Challacombe J.F."/>
            <person name="Green L."/>
            <person name="Lindler L.E."/>
            <person name="Nikolich M.P."/>
            <person name="Richardson P."/>
        </authorList>
    </citation>
    <scope>NUCLEOTIDE SEQUENCE [LARGE SCALE GENOMIC DNA]</scope>
    <source>
        <strain>YPIII</strain>
    </source>
</reference>
<feature type="chain" id="PRO_1000141336" description="Small ribosomal subunit protein uS13">
    <location>
        <begin position="1"/>
        <end position="118"/>
    </location>
</feature>
<feature type="region of interest" description="Disordered" evidence="2">
    <location>
        <begin position="92"/>
        <end position="118"/>
    </location>
</feature>
<evidence type="ECO:0000255" key="1">
    <source>
        <dbReference type="HAMAP-Rule" id="MF_01315"/>
    </source>
</evidence>
<evidence type="ECO:0000256" key="2">
    <source>
        <dbReference type="SAM" id="MobiDB-lite"/>
    </source>
</evidence>
<evidence type="ECO:0000305" key="3"/>
<accession>B1JIY3</accession>
<dbReference type="EMBL" id="CP000950">
    <property type="protein sequence ID" value="ACA66618.1"/>
    <property type="molecule type" value="Genomic_DNA"/>
</dbReference>
<dbReference type="RefSeq" id="WP_002213346.1">
    <property type="nucleotide sequence ID" value="NZ_CP009792.1"/>
</dbReference>
<dbReference type="SMR" id="B1JIY3"/>
<dbReference type="GeneID" id="96663174"/>
<dbReference type="KEGG" id="ypy:YPK_0305"/>
<dbReference type="PATRIC" id="fig|502800.11.peg.912"/>
<dbReference type="GO" id="GO:0005829">
    <property type="term" value="C:cytosol"/>
    <property type="evidence" value="ECO:0007669"/>
    <property type="project" value="TreeGrafter"/>
</dbReference>
<dbReference type="GO" id="GO:0015935">
    <property type="term" value="C:small ribosomal subunit"/>
    <property type="evidence" value="ECO:0007669"/>
    <property type="project" value="TreeGrafter"/>
</dbReference>
<dbReference type="GO" id="GO:0019843">
    <property type="term" value="F:rRNA binding"/>
    <property type="evidence" value="ECO:0007669"/>
    <property type="project" value="UniProtKB-UniRule"/>
</dbReference>
<dbReference type="GO" id="GO:0003735">
    <property type="term" value="F:structural constituent of ribosome"/>
    <property type="evidence" value="ECO:0007669"/>
    <property type="project" value="InterPro"/>
</dbReference>
<dbReference type="GO" id="GO:0000049">
    <property type="term" value="F:tRNA binding"/>
    <property type="evidence" value="ECO:0007669"/>
    <property type="project" value="UniProtKB-UniRule"/>
</dbReference>
<dbReference type="GO" id="GO:0006412">
    <property type="term" value="P:translation"/>
    <property type="evidence" value="ECO:0007669"/>
    <property type="project" value="UniProtKB-UniRule"/>
</dbReference>
<dbReference type="FunFam" id="1.10.8.50:FF:000001">
    <property type="entry name" value="30S ribosomal protein S13"/>
    <property type="match status" value="1"/>
</dbReference>
<dbReference type="FunFam" id="4.10.910.10:FF:000001">
    <property type="entry name" value="30S ribosomal protein S13"/>
    <property type="match status" value="1"/>
</dbReference>
<dbReference type="Gene3D" id="1.10.8.50">
    <property type="match status" value="1"/>
</dbReference>
<dbReference type="Gene3D" id="4.10.910.10">
    <property type="entry name" value="30s ribosomal protein s13, domain 2"/>
    <property type="match status" value="1"/>
</dbReference>
<dbReference type="HAMAP" id="MF_01315">
    <property type="entry name" value="Ribosomal_uS13"/>
    <property type="match status" value="1"/>
</dbReference>
<dbReference type="InterPro" id="IPR027437">
    <property type="entry name" value="Rbsml_uS13_C"/>
</dbReference>
<dbReference type="InterPro" id="IPR001892">
    <property type="entry name" value="Ribosomal_uS13"/>
</dbReference>
<dbReference type="InterPro" id="IPR010979">
    <property type="entry name" value="Ribosomal_uS13-like_H2TH"/>
</dbReference>
<dbReference type="InterPro" id="IPR019980">
    <property type="entry name" value="Ribosomal_uS13_bac-type"/>
</dbReference>
<dbReference type="InterPro" id="IPR018269">
    <property type="entry name" value="Ribosomal_uS13_CS"/>
</dbReference>
<dbReference type="NCBIfam" id="TIGR03631">
    <property type="entry name" value="uS13_bact"/>
    <property type="match status" value="1"/>
</dbReference>
<dbReference type="PANTHER" id="PTHR10871">
    <property type="entry name" value="30S RIBOSOMAL PROTEIN S13/40S RIBOSOMAL PROTEIN S18"/>
    <property type="match status" value="1"/>
</dbReference>
<dbReference type="PANTHER" id="PTHR10871:SF1">
    <property type="entry name" value="SMALL RIBOSOMAL SUBUNIT PROTEIN US13M"/>
    <property type="match status" value="1"/>
</dbReference>
<dbReference type="Pfam" id="PF00416">
    <property type="entry name" value="Ribosomal_S13"/>
    <property type="match status" value="1"/>
</dbReference>
<dbReference type="PIRSF" id="PIRSF002134">
    <property type="entry name" value="Ribosomal_S13"/>
    <property type="match status" value="1"/>
</dbReference>
<dbReference type="SUPFAM" id="SSF46946">
    <property type="entry name" value="S13-like H2TH domain"/>
    <property type="match status" value="1"/>
</dbReference>
<dbReference type="PROSITE" id="PS00646">
    <property type="entry name" value="RIBOSOMAL_S13_1"/>
    <property type="match status" value="1"/>
</dbReference>
<dbReference type="PROSITE" id="PS50159">
    <property type="entry name" value="RIBOSOMAL_S13_2"/>
    <property type="match status" value="1"/>
</dbReference>
<sequence length="118" mass="13252">MARIAGINIPDQKHTVIALTAIFGIGKTRSQAICVAAGIAEHVKISELSEEQIEKLRDEVAKYVVEGDLRREVTLSIKRLMDLGTYRGLRHRRGLPVRGQRTKTNARTRKGPRKPIKK</sequence>
<keyword id="KW-0687">Ribonucleoprotein</keyword>
<keyword id="KW-0689">Ribosomal protein</keyword>
<keyword id="KW-0694">RNA-binding</keyword>
<keyword id="KW-0699">rRNA-binding</keyword>
<keyword id="KW-0820">tRNA-binding</keyword>
<gene>
    <name evidence="1" type="primary">rpsM</name>
    <name type="ordered locus">YPK_0305</name>
</gene>
<proteinExistence type="inferred from homology"/>
<name>RS13_YERPY</name>
<comment type="function">
    <text evidence="1">Located at the top of the head of the 30S subunit, it contacts several helices of the 16S rRNA. In the 70S ribosome it contacts the 23S rRNA (bridge B1a) and protein L5 of the 50S subunit (bridge B1b), connecting the 2 subunits; these bridges are implicated in subunit movement. Contacts the tRNAs in the A and P-sites.</text>
</comment>
<comment type="subunit">
    <text evidence="1">Part of the 30S ribosomal subunit. Forms a loose heterodimer with protein S19. Forms two bridges to the 50S subunit in the 70S ribosome.</text>
</comment>
<comment type="similarity">
    <text evidence="1">Belongs to the universal ribosomal protein uS13 family.</text>
</comment>
<protein>
    <recommendedName>
        <fullName evidence="1">Small ribosomal subunit protein uS13</fullName>
    </recommendedName>
    <alternativeName>
        <fullName evidence="3">30S ribosomal protein S13</fullName>
    </alternativeName>
</protein>